<proteinExistence type="inferred from homology"/>
<dbReference type="EMBL" id="BX571857">
    <property type="protein sequence ID" value="CAG44242.1"/>
    <property type="molecule type" value="Genomic_DNA"/>
</dbReference>
<dbReference type="RefSeq" id="WP_001001019.1">
    <property type="nucleotide sequence ID" value="NC_002953.3"/>
</dbReference>
<dbReference type="KEGG" id="sas:SAS2426"/>
<dbReference type="HOGENOM" id="CLU_082099_3_0_9"/>
<dbReference type="GO" id="GO:0005886">
    <property type="term" value="C:plasma membrane"/>
    <property type="evidence" value="ECO:0007669"/>
    <property type="project" value="UniProtKB-SubCell"/>
</dbReference>
<dbReference type="GO" id="GO:0031640">
    <property type="term" value="P:killing of cells of another organism"/>
    <property type="evidence" value="ECO:0007669"/>
    <property type="project" value="UniProtKB-KW"/>
</dbReference>
<dbReference type="InterPro" id="IPR007300">
    <property type="entry name" value="CidB/LrgB"/>
</dbReference>
<dbReference type="PANTHER" id="PTHR30249:SF17">
    <property type="entry name" value="HOLIN-LIKE PROTEIN CIDB"/>
    <property type="match status" value="1"/>
</dbReference>
<dbReference type="PANTHER" id="PTHR30249">
    <property type="entry name" value="PUTATIVE SEROTONIN TRANSPORTER"/>
    <property type="match status" value="1"/>
</dbReference>
<dbReference type="Pfam" id="PF04172">
    <property type="entry name" value="LrgB"/>
    <property type="match status" value="1"/>
</dbReference>
<accession>Q6G6D4</accession>
<comment type="function">
    <text evidence="1">Increases the activity of extracellular murein hydrolases possibly by mediating their export via hole formation. Inhibited by the antiholin-like proteins LrgAB. In an unstressed cell, the LrgAB products probably inhibit the function of the CidAB proteins. When a cell is stressed by the addition of antibiotics or by other factors in the environment, the CidAB proteins possibly oligomerize within the bacterial cell membrane, creating lesions that disrupt the proton motive force, which in turn results in loss of cell viability. These lesions are also hypothesized to regulate the subsequent cell lysis by either allowing the murein hydrolases access to the cell wall substrate and/or regulating their activity by a possible change in the cell wall pH that results from loss of membrane potential (By similarity).</text>
</comment>
<comment type="subcellular location">
    <subcellularLocation>
        <location evidence="3">Cell membrane</location>
        <topology evidence="3">Multi-pass membrane protein</topology>
    </subcellularLocation>
</comment>
<comment type="similarity">
    <text evidence="3">Belongs to the CidB/LrgB family. CidB subfamily.</text>
</comment>
<reference key="1">
    <citation type="journal article" date="2004" name="Proc. Natl. Acad. Sci. U.S.A.">
        <title>Complete genomes of two clinical Staphylococcus aureus strains: evidence for the rapid evolution of virulence and drug resistance.</title>
        <authorList>
            <person name="Holden M.T.G."/>
            <person name="Feil E.J."/>
            <person name="Lindsay J.A."/>
            <person name="Peacock S.J."/>
            <person name="Day N.P.J."/>
            <person name="Enright M.C."/>
            <person name="Foster T.J."/>
            <person name="Moore C.E."/>
            <person name="Hurst L."/>
            <person name="Atkin R."/>
            <person name="Barron A."/>
            <person name="Bason N."/>
            <person name="Bentley S.D."/>
            <person name="Chillingworth C."/>
            <person name="Chillingworth T."/>
            <person name="Churcher C."/>
            <person name="Clark L."/>
            <person name="Corton C."/>
            <person name="Cronin A."/>
            <person name="Doggett J."/>
            <person name="Dowd L."/>
            <person name="Feltwell T."/>
            <person name="Hance Z."/>
            <person name="Harris B."/>
            <person name="Hauser H."/>
            <person name="Holroyd S."/>
            <person name="Jagels K."/>
            <person name="James K.D."/>
            <person name="Lennard N."/>
            <person name="Line A."/>
            <person name="Mayes R."/>
            <person name="Moule S."/>
            <person name="Mungall K."/>
            <person name="Ormond D."/>
            <person name="Quail M.A."/>
            <person name="Rabbinowitsch E."/>
            <person name="Rutherford K.M."/>
            <person name="Sanders M."/>
            <person name="Sharp S."/>
            <person name="Simmonds M."/>
            <person name="Stevens K."/>
            <person name="Whitehead S."/>
            <person name="Barrell B.G."/>
            <person name="Spratt B.G."/>
            <person name="Parkhill J."/>
        </authorList>
    </citation>
    <scope>NUCLEOTIDE SEQUENCE [LARGE SCALE GENOMIC DNA]</scope>
    <source>
        <strain>MSSA476</strain>
    </source>
</reference>
<protein>
    <recommendedName>
        <fullName>Holin-like protein CidB</fullName>
    </recommendedName>
</protein>
<organism>
    <name type="scientific">Staphylococcus aureus (strain MSSA476)</name>
    <dbReference type="NCBI Taxonomy" id="282459"/>
    <lineage>
        <taxon>Bacteria</taxon>
        <taxon>Bacillati</taxon>
        <taxon>Bacillota</taxon>
        <taxon>Bacilli</taxon>
        <taxon>Bacillales</taxon>
        <taxon>Staphylococcaceae</taxon>
        <taxon>Staphylococcus</taxon>
    </lineage>
</organism>
<feature type="chain" id="PRO_0000217048" description="Holin-like protein CidB">
    <location>
        <begin position="1"/>
        <end position="229"/>
    </location>
</feature>
<feature type="transmembrane region" description="Helical" evidence="2">
    <location>
        <begin position="4"/>
        <end position="21"/>
    </location>
</feature>
<feature type="transmembrane region" description="Helical" evidence="2">
    <location>
        <begin position="30"/>
        <end position="52"/>
    </location>
</feature>
<feature type="transmembrane region" description="Helical" evidence="2">
    <location>
        <begin position="62"/>
        <end position="80"/>
    </location>
</feature>
<feature type="transmembrane region" description="Helical" evidence="2">
    <location>
        <begin position="89"/>
        <end position="111"/>
    </location>
</feature>
<feature type="transmembrane region" description="Helical" evidence="2">
    <location>
        <begin position="147"/>
        <end position="169"/>
    </location>
</feature>
<feature type="transmembrane region" description="Helical" evidence="2">
    <location>
        <begin position="204"/>
        <end position="226"/>
    </location>
</feature>
<evidence type="ECO:0000250" key="1"/>
<evidence type="ECO:0000255" key="2"/>
<evidence type="ECO:0000305" key="3"/>
<name>CIDB_STAAS</name>
<keyword id="KW-1003">Cell membrane</keyword>
<keyword id="KW-0204">Cytolysis</keyword>
<keyword id="KW-0472">Membrane</keyword>
<keyword id="KW-0812">Transmembrane</keyword>
<keyword id="KW-1133">Transmembrane helix</keyword>
<sequence>MNDYVQALLMILLTVVLYYFAKRLQQKYPNPFLNPALIASLGIIFVLLIFGISYNGYMKGGSWINHILNATVVCLAYPLYKNREKIKDNVSIIFASVLTGVMLNFMLVFLTLKAFGYSKDVIVTLLPRSITAAVGIEVSHELGGTDTMTVLFIITTGLIGSILGSMLLRFGRFESSIAKGLTYGNASHAFGTAKALEMDIESGAFSSIGMILTAVISSVLIPVLILLFY</sequence>
<gene>
    <name type="primary">cidB</name>
    <name type="ordered locus">SAS2426</name>
</gene>